<evidence type="ECO:0000255" key="1">
    <source>
        <dbReference type="HAMAP-Rule" id="MF_01038"/>
    </source>
</evidence>
<organism>
    <name type="scientific">Shewanella denitrificans (strain OS217 / ATCC BAA-1090 / DSM 15013)</name>
    <dbReference type="NCBI Taxonomy" id="318161"/>
    <lineage>
        <taxon>Bacteria</taxon>
        <taxon>Pseudomonadati</taxon>
        <taxon>Pseudomonadota</taxon>
        <taxon>Gammaproteobacteria</taxon>
        <taxon>Alteromonadales</taxon>
        <taxon>Shewanellaceae</taxon>
        <taxon>Shewanella</taxon>
    </lineage>
</organism>
<reference key="1">
    <citation type="submission" date="2006-03" db="EMBL/GenBank/DDBJ databases">
        <title>Complete sequence of Shewanella denitrificans OS217.</title>
        <authorList>
            <consortium name="US DOE Joint Genome Institute"/>
            <person name="Copeland A."/>
            <person name="Lucas S."/>
            <person name="Lapidus A."/>
            <person name="Barry K."/>
            <person name="Detter J.C."/>
            <person name="Glavina del Rio T."/>
            <person name="Hammon N."/>
            <person name="Israni S."/>
            <person name="Dalin E."/>
            <person name="Tice H."/>
            <person name="Pitluck S."/>
            <person name="Brettin T."/>
            <person name="Bruce D."/>
            <person name="Han C."/>
            <person name="Tapia R."/>
            <person name="Gilna P."/>
            <person name="Kiss H."/>
            <person name="Schmutz J."/>
            <person name="Larimer F."/>
            <person name="Land M."/>
            <person name="Hauser L."/>
            <person name="Kyrpides N."/>
            <person name="Lykidis A."/>
            <person name="Richardson P."/>
        </authorList>
    </citation>
    <scope>NUCLEOTIDE SEQUENCE [LARGE SCALE GENOMIC DNA]</scope>
    <source>
        <strain>OS217 / ATCC BAA-1090 / DSM 15013</strain>
    </source>
</reference>
<protein>
    <recommendedName>
        <fullName evidence="1">2,3-bisphosphoglycerate-independent phosphoglycerate mutase</fullName>
        <shortName evidence="1">BPG-independent PGAM</shortName>
        <shortName evidence="1">Phosphoglyceromutase</shortName>
        <shortName evidence="1">iPGM</shortName>
        <ecNumber evidence="1">5.4.2.12</ecNumber>
    </recommendedName>
</protein>
<sequence length="514" mass="55839">MTTAKRPLALLILDGWGYRENPHNNAIFHARTPVLDKLNAQFPNSLISGSGLDVGLPDGQMGNSEVGHINIGSGRVVYQELTRVSKAIEEGEFEENTVLCKTIDDAIKANGAVHIMGLLSPGGVHSHEEHIEAMCRMAVKRGAKQVYLHAFLDGRDTPPRSAKGSLAHFGDLFTTLGQGRIASVIGRYYAMDRDNRWDRVSQAYELITQGKGKFSYSNAVDALEAAYSRDENDEFVAASSITDAQGQTASLNDGDSLIFMNFRADRARQITRSVINADFDGFERAVTPKINFVTLTEYAADISAPKAFSSSDLVNTLGETLQNLGKTQLRISETEKYAHVTFFFNGGKEDPFKGEDRIMIPSPKVATYDLQPEMNSTELTDKLVEAIESAKYDVVICNYPNGDMVGHTGNFDAAVKACEAVDACIGRVVAALAKVNGECLITADHGNAEQMTDESTGQAHTAHTSELVPFIYVGRDASIKDGGRLSDIAPTMLSLMGQPVPAEMTGRCIIDLKE</sequence>
<proteinExistence type="inferred from homology"/>
<accession>Q12HV5</accession>
<comment type="function">
    <text evidence="1">Catalyzes the interconversion of 2-phosphoglycerate and 3-phosphoglycerate.</text>
</comment>
<comment type="catalytic activity">
    <reaction evidence="1">
        <text>(2R)-2-phosphoglycerate = (2R)-3-phosphoglycerate</text>
        <dbReference type="Rhea" id="RHEA:15901"/>
        <dbReference type="ChEBI" id="CHEBI:58272"/>
        <dbReference type="ChEBI" id="CHEBI:58289"/>
        <dbReference type="EC" id="5.4.2.12"/>
    </reaction>
</comment>
<comment type="cofactor">
    <cofactor evidence="1">
        <name>Mn(2+)</name>
        <dbReference type="ChEBI" id="CHEBI:29035"/>
    </cofactor>
    <text evidence="1">Binds 2 manganese ions per subunit.</text>
</comment>
<comment type="pathway">
    <text evidence="1">Carbohydrate degradation; glycolysis; pyruvate from D-glyceraldehyde 3-phosphate: step 3/5.</text>
</comment>
<comment type="subunit">
    <text evidence="1">Monomer.</text>
</comment>
<comment type="similarity">
    <text evidence="1">Belongs to the BPG-independent phosphoglycerate mutase family.</text>
</comment>
<keyword id="KW-0324">Glycolysis</keyword>
<keyword id="KW-0413">Isomerase</keyword>
<keyword id="KW-0464">Manganese</keyword>
<keyword id="KW-0479">Metal-binding</keyword>
<keyword id="KW-1185">Reference proteome</keyword>
<name>GPMI_SHEDO</name>
<dbReference type="EC" id="5.4.2.12" evidence="1"/>
<dbReference type="EMBL" id="CP000302">
    <property type="protein sequence ID" value="ABE56971.1"/>
    <property type="molecule type" value="Genomic_DNA"/>
</dbReference>
<dbReference type="RefSeq" id="WP_011498109.1">
    <property type="nucleotide sequence ID" value="NC_007954.1"/>
</dbReference>
<dbReference type="SMR" id="Q12HV5"/>
<dbReference type="STRING" id="318161.Sden_3698"/>
<dbReference type="KEGG" id="sdn:Sden_3698"/>
<dbReference type="eggNOG" id="COG0696">
    <property type="taxonomic scope" value="Bacteria"/>
</dbReference>
<dbReference type="HOGENOM" id="CLU_026099_2_0_6"/>
<dbReference type="OrthoDB" id="9800863at2"/>
<dbReference type="UniPathway" id="UPA00109">
    <property type="reaction ID" value="UER00186"/>
</dbReference>
<dbReference type="Proteomes" id="UP000001982">
    <property type="component" value="Chromosome"/>
</dbReference>
<dbReference type="GO" id="GO:0005829">
    <property type="term" value="C:cytosol"/>
    <property type="evidence" value="ECO:0007669"/>
    <property type="project" value="TreeGrafter"/>
</dbReference>
<dbReference type="GO" id="GO:0030145">
    <property type="term" value="F:manganese ion binding"/>
    <property type="evidence" value="ECO:0007669"/>
    <property type="project" value="UniProtKB-UniRule"/>
</dbReference>
<dbReference type="GO" id="GO:0004619">
    <property type="term" value="F:phosphoglycerate mutase activity"/>
    <property type="evidence" value="ECO:0007669"/>
    <property type="project" value="UniProtKB-EC"/>
</dbReference>
<dbReference type="GO" id="GO:0006007">
    <property type="term" value="P:glucose catabolic process"/>
    <property type="evidence" value="ECO:0007669"/>
    <property type="project" value="InterPro"/>
</dbReference>
<dbReference type="GO" id="GO:0006096">
    <property type="term" value="P:glycolytic process"/>
    <property type="evidence" value="ECO:0007669"/>
    <property type="project" value="UniProtKB-UniRule"/>
</dbReference>
<dbReference type="CDD" id="cd16010">
    <property type="entry name" value="iPGM"/>
    <property type="match status" value="1"/>
</dbReference>
<dbReference type="FunFam" id="3.40.1450.10:FF:000001">
    <property type="entry name" value="2,3-bisphosphoglycerate-independent phosphoglycerate mutase"/>
    <property type="match status" value="1"/>
</dbReference>
<dbReference type="FunFam" id="3.40.720.10:FF:000001">
    <property type="entry name" value="2,3-bisphosphoglycerate-independent phosphoglycerate mutase"/>
    <property type="match status" value="1"/>
</dbReference>
<dbReference type="Gene3D" id="3.40.720.10">
    <property type="entry name" value="Alkaline Phosphatase, subunit A"/>
    <property type="match status" value="1"/>
</dbReference>
<dbReference type="Gene3D" id="3.40.1450.10">
    <property type="entry name" value="BPG-independent phosphoglycerate mutase, domain B"/>
    <property type="match status" value="1"/>
</dbReference>
<dbReference type="HAMAP" id="MF_01038">
    <property type="entry name" value="GpmI"/>
    <property type="match status" value="1"/>
</dbReference>
<dbReference type="InterPro" id="IPR017850">
    <property type="entry name" value="Alkaline_phosphatase_core_sf"/>
</dbReference>
<dbReference type="InterPro" id="IPR011258">
    <property type="entry name" value="BPG-indep_PGM_N"/>
</dbReference>
<dbReference type="InterPro" id="IPR006124">
    <property type="entry name" value="Metalloenzyme"/>
</dbReference>
<dbReference type="InterPro" id="IPR036646">
    <property type="entry name" value="PGAM_B_sf"/>
</dbReference>
<dbReference type="InterPro" id="IPR005995">
    <property type="entry name" value="Pgm_bpd_ind"/>
</dbReference>
<dbReference type="NCBIfam" id="TIGR01307">
    <property type="entry name" value="pgm_bpd_ind"/>
    <property type="match status" value="1"/>
</dbReference>
<dbReference type="NCBIfam" id="NF003897">
    <property type="entry name" value="PRK05434.1-5"/>
    <property type="match status" value="1"/>
</dbReference>
<dbReference type="PANTHER" id="PTHR31637">
    <property type="entry name" value="2,3-BISPHOSPHOGLYCERATE-INDEPENDENT PHOSPHOGLYCERATE MUTASE"/>
    <property type="match status" value="1"/>
</dbReference>
<dbReference type="PANTHER" id="PTHR31637:SF0">
    <property type="entry name" value="2,3-BISPHOSPHOGLYCERATE-INDEPENDENT PHOSPHOGLYCERATE MUTASE"/>
    <property type="match status" value="1"/>
</dbReference>
<dbReference type="Pfam" id="PF06415">
    <property type="entry name" value="iPGM_N"/>
    <property type="match status" value="1"/>
</dbReference>
<dbReference type="Pfam" id="PF01676">
    <property type="entry name" value="Metalloenzyme"/>
    <property type="match status" value="1"/>
</dbReference>
<dbReference type="PIRSF" id="PIRSF001492">
    <property type="entry name" value="IPGAM"/>
    <property type="match status" value="1"/>
</dbReference>
<dbReference type="SUPFAM" id="SSF64158">
    <property type="entry name" value="2,3-Bisphosphoglycerate-independent phosphoglycerate mutase, substrate-binding domain"/>
    <property type="match status" value="1"/>
</dbReference>
<dbReference type="SUPFAM" id="SSF53649">
    <property type="entry name" value="Alkaline phosphatase-like"/>
    <property type="match status" value="1"/>
</dbReference>
<feature type="chain" id="PRO_1000064003" description="2,3-bisphosphoglycerate-independent phosphoglycerate mutase">
    <location>
        <begin position="1"/>
        <end position="514"/>
    </location>
</feature>
<feature type="active site" description="Phosphoserine intermediate" evidence="1">
    <location>
        <position position="64"/>
    </location>
</feature>
<feature type="binding site" evidence="1">
    <location>
        <position position="14"/>
    </location>
    <ligand>
        <name>Mn(2+)</name>
        <dbReference type="ChEBI" id="CHEBI:29035"/>
        <label>2</label>
    </ligand>
</feature>
<feature type="binding site" evidence="1">
    <location>
        <position position="64"/>
    </location>
    <ligand>
        <name>Mn(2+)</name>
        <dbReference type="ChEBI" id="CHEBI:29035"/>
        <label>2</label>
    </ligand>
</feature>
<feature type="binding site" evidence="1">
    <location>
        <position position="125"/>
    </location>
    <ligand>
        <name>substrate</name>
    </ligand>
</feature>
<feature type="binding site" evidence="1">
    <location>
        <begin position="155"/>
        <end position="156"/>
    </location>
    <ligand>
        <name>substrate</name>
    </ligand>
</feature>
<feature type="binding site" evidence="1">
    <location>
        <position position="187"/>
    </location>
    <ligand>
        <name>substrate</name>
    </ligand>
</feature>
<feature type="binding site" evidence="1">
    <location>
        <position position="193"/>
    </location>
    <ligand>
        <name>substrate</name>
    </ligand>
</feature>
<feature type="binding site" evidence="1">
    <location>
        <begin position="263"/>
        <end position="266"/>
    </location>
    <ligand>
        <name>substrate</name>
    </ligand>
</feature>
<feature type="binding site" evidence="1">
    <location>
        <position position="336"/>
    </location>
    <ligand>
        <name>substrate</name>
    </ligand>
</feature>
<feature type="binding site" evidence="1">
    <location>
        <position position="403"/>
    </location>
    <ligand>
        <name>Mn(2+)</name>
        <dbReference type="ChEBI" id="CHEBI:29035"/>
        <label>1</label>
    </ligand>
</feature>
<feature type="binding site" evidence="1">
    <location>
        <position position="407"/>
    </location>
    <ligand>
        <name>Mn(2+)</name>
        <dbReference type="ChEBI" id="CHEBI:29035"/>
        <label>1</label>
    </ligand>
</feature>
<feature type="binding site" evidence="1">
    <location>
        <position position="444"/>
    </location>
    <ligand>
        <name>Mn(2+)</name>
        <dbReference type="ChEBI" id="CHEBI:29035"/>
        <label>2</label>
    </ligand>
</feature>
<feature type="binding site" evidence="1">
    <location>
        <position position="445"/>
    </location>
    <ligand>
        <name>Mn(2+)</name>
        <dbReference type="ChEBI" id="CHEBI:29035"/>
        <label>2</label>
    </ligand>
</feature>
<feature type="binding site" evidence="1">
    <location>
        <position position="463"/>
    </location>
    <ligand>
        <name>Mn(2+)</name>
        <dbReference type="ChEBI" id="CHEBI:29035"/>
        <label>1</label>
    </ligand>
</feature>
<gene>
    <name evidence="1" type="primary">gpmI</name>
    <name type="ordered locus">Sden_3698</name>
</gene>